<comment type="function">
    <text evidence="1">Catalyzes the base-exchange of a guanine (G) residue with the queuine precursor 7-aminomethyl-7-deazaguanine (PreQ1) at position 34 (anticodon wobble position) in tRNAs with GU(N) anticodons (tRNA-Asp, -Asn, -His and -Tyr). Catalysis occurs through a double-displacement mechanism. The nucleophile active site attacks the C1' of nucleotide 34 to detach the guanine base from the RNA, forming a covalent enzyme-RNA intermediate. The proton acceptor active site deprotonates the incoming PreQ1, allowing a nucleophilic attack on the C1' of the ribose to form the product. After dissociation, two additional enzymatic reactions on the tRNA convert PreQ1 to queuine (Q), resulting in the hypermodified nucleoside queuosine (7-(((4,5-cis-dihydroxy-2-cyclopenten-1-yl)amino)methyl)-7-deazaguanosine).</text>
</comment>
<comment type="catalytic activity">
    <reaction evidence="1">
        <text>7-aminomethyl-7-carbaguanine + guanosine(34) in tRNA = 7-aminomethyl-7-carbaguanosine(34) in tRNA + guanine</text>
        <dbReference type="Rhea" id="RHEA:24104"/>
        <dbReference type="Rhea" id="RHEA-COMP:10341"/>
        <dbReference type="Rhea" id="RHEA-COMP:10342"/>
        <dbReference type="ChEBI" id="CHEBI:16235"/>
        <dbReference type="ChEBI" id="CHEBI:58703"/>
        <dbReference type="ChEBI" id="CHEBI:74269"/>
        <dbReference type="ChEBI" id="CHEBI:82833"/>
        <dbReference type="EC" id="2.4.2.29"/>
    </reaction>
</comment>
<comment type="cofactor">
    <cofactor evidence="1">
        <name>Zn(2+)</name>
        <dbReference type="ChEBI" id="CHEBI:29105"/>
    </cofactor>
    <text evidence="1">Binds 1 zinc ion per subunit.</text>
</comment>
<comment type="pathway">
    <text evidence="1">tRNA modification; tRNA-queuosine biosynthesis.</text>
</comment>
<comment type="subunit">
    <text evidence="1">Homodimer. Within each dimer, one monomer is responsible for RNA recognition and catalysis, while the other monomer binds to the replacement base PreQ1.</text>
</comment>
<comment type="similarity">
    <text evidence="1">Belongs to the queuine tRNA-ribosyltransferase family.</text>
</comment>
<protein>
    <recommendedName>
        <fullName evidence="1">Queuine tRNA-ribosyltransferase</fullName>
        <ecNumber evidence="1">2.4.2.29</ecNumber>
    </recommendedName>
    <alternativeName>
        <fullName evidence="1">Guanine insertion enzyme</fullName>
    </alternativeName>
    <alternativeName>
        <fullName evidence="1">tRNA-guanine transglycosylase</fullName>
    </alternativeName>
</protein>
<feature type="chain" id="PRO_1000097547" description="Queuine tRNA-ribosyltransferase">
    <location>
        <begin position="1"/>
        <end position="371"/>
    </location>
</feature>
<feature type="region of interest" description="RNA binding" evidence="1">
    <location>
        <begin position="246"/>
        <end position="252"/>
    </location>
</feature>
<feature type="region of interest" description="RNA binding; important for wobble base 34 recognition" evidence="1">
    <location>
        <begin position="270"/>
        <end position="274"/>
    </location>
</feature>
<feature type="active site" description="Proton acceptor" evidence="1">
    <location>
        <position position="90"/>
    </location>
</feature>
<feature type="active site" description="Nucleophile" evidence="1">
    <location>
        <position position="265"/>
    </location>
</feature>
<feature type="binding site" evidence="1">
    <location>
        <begin position="90"/>
        <end position="94"/>
    </location>
    <ligand>
        <name>substrate</name>
    </ligand>
</feature>
<feature type="binding site" evidence="1">
    <location>
        <position position="144"/>
    </location>
    <ligand>
        <name>substrate</name>
    </ligand>
</feature>
<feature type="binding site" evidence="1">
    <location>
        <position position="189"/>
    </location>
    <ligand>
        <name>substrate</name>
    </ligand>
</feature>
<feature type="binding site" evidence="1">
    <location>
        <position position="215"/>
    </location>
    <ligand>
        <name>substrate</name>
    </ligand>
</feature>
<feature type="binding site" evidence="1">
    <location>
        <position position="303"/>
    </location>
    <ligand>
        <name>Zn(2+)</name>
        <dbReference type="ChEBI" id="CHEBI:29105"/>
    </ligand>
</feature>
<feature type="binding site" evidence="1">
    <location>
        <position position="305"/>
    </location>
    <ligand>
        <name>Zn(2+)</name>
        <dbReference type="ChEBI" id="CHEBI:29105"/>
    </ligand>
</feature>
<feature type="binding site" evidence="1">
    <location>
        <position position="308"/>
    </location>
    <ligand>
        <name>Zn(2+)</name>
        <dbReference type="ChEBI" id="CHEBI:29105"/>
    </ligand>
</feature>
<feature type="binding site" evidence="1">
    <location>
        <position position="334"/>
    </location>
    <ligand>
        <name>Zn(2+)</name>
        <dbReference type="ChEBI" id="CHEBI:29105"/>
    </ligand>
</feature>
<keyword id="KW-0328">Glycosyltransferase</keyword>
<keyword id="KW-0479">Metal-binding</keyword>
<keyword id="KW-0671">Queuosine biosynthesis</keyword>
<keyword id="KW-1185">Reference proteome</keyword>
<keyword id="KW-0808">Transferase</keyword>
<keyword id="KW-0819">tRNA processing</keyword>
<keyword id="KW-0862">Zinc</keyword>
<proteinExistence type="inferred from homology"/>
<gene>
    <name evidence="1" type="primary">tgt</name>
    <name type="ordered locus">HPG27_260</name>
</gene>
<dbReference type="EC" id="2.4.2.29" evidence="1"/>
<dbReference type="EMBL" id="CP001173">
    <property type="protein sequence ID" value="ACI27027.1"/>
    <property type="molecule type" value="Genomic_DNA"/>
</dbReference>
<dbReference type="RefSeq" id="WP_000347349.1">
    <property type="nucleotide sequence ID" value="NC_011333.1"/>
</dbReference>
<dbReference type="SMR" id="B5ZA47"/>
<dbReference type="KEGG" id="hpg:HPG27_260"/>
<dbReference type="HOGENOM" id="CLU_022060_0_1_7"/>
<dbReference type="UniPathway" id="UPA00392"/>
<dbReference type="Proteomes" id="UP000001735">
    <property type="component" value="Chromosome"/>
</dbReference>
<dbReference type="GO" id="GO:0005829">
    <property type="term" value="C:cytosol"/>
    <property type="evidence" value="ECO:0007669"/>
    <property type="project" value="TreeGrafter"/>
</dbReference>
<dbReference type="GO" id="GO:0046872">
    <property type="term" value="F:metal ion binding"/>
    <property type="evidence" value="ECO:0007669"/>
    <property type="project" value="UniProtKB-KW"/>
</dbReference>
<dbReference type="GO" id="GO:0008479">
    <property type="term" value="F:tRNA-guanosine(34) queuine transglycosylase activity"/>
    <property type="evidence" value="ECO:0007669"/>
    <property type="project" value="UniProtKB-UniRule"/>
</dbReference>
<dbReference type="GO" id="GO:0008616">
    <property type="term" value="P:queuosine biosynthetic process"/>
    <property type="evidence" value="ECO:0007669"/>
    <property type="project" value="UniProtKB-UniRule"/>
</dbReference>
<dbReference type="GO" id="GO:0101030">
    <property type="term" value="P:tRNA-guanine transglycosylation"/>
    <property type="evidence" value="ECO:0007669"/>
    <property type="project" value="InterPro"/>
</dbReference>
<dbReference type="Gene3D" id="3.20.20.105">
    <property type="entry name" value="Queuine tRNA-ribosyltransferase-like"/>
    <property type="match status" value="1"/>
</dbReference>
<dbReference type="HAMAP" id="MF_00168">
    <property type="entry name" value="Q_tRNA_Tgt"/>
    <property type="match status" value="1"/>
</dbReference>
<dbReference type="InterPro" id="IPR004803">
    <property type="entry name" value="TGT"/>
</dbReference>
<dbReference type="InterPro" id="IPR036511">
    <property type="entry name" value="TGT-like_sf"/>
</dbReference>
<dbReference type="InterPro" id="IPR002616">
    <property type="entry name" value="tRNA_ribo_trans-like"/>
</dbReference>
<dbReference type="NCBIfam" id="TIGR00430">
    <property type="entry name" value="Q_tRNA_tgt"/>
    <property type="match status" value="1"/>
</dbReference>
<dbReference type="NCBIfam" id="TIGR00449">
    <property type="entry name" value="tgt_general"/>
    <property type="match status" value="1"/>
</dbReference>
<dbReference type="PANTHER" id="PTHR43530">
    <property type="entry name" value="QUEUINE TRNA-RIBOSYLTRANSFERASE CATALYTIC SUBUNIT 1"/>
    <property type="match status" value="1"/>
</dbReference>
<dbReference type="PANTHER" id="PTHR43530:SF1">
    <property type="entry name" value="QUEUINE TRNA-RIBOSYLTRANSFERASE CATALYTIC SUBUNIT 1"/>
    <property type="match status" value="1"/>
</dbReference>
<dbReference type="Pfam" id="PF01702">
    <property type="entry name" value="TGT"/>
    <property type="match status" value="1"/>
</dbReference>
<dbReference type="SUPFAM" id="SSF51713">
    <property type="entry name" value="tRNA-guanine transglycosylase"/>
    <property type="match status" value="1"/>
</dbReference>
<reference key="1">
    <citation type="journal article" date="2009" name="J. Bacteriol.">
        <title>The complete genome sequence of Helicobacter pylori strain G27.</title>
        <authorList>
            <person name="Baltrus D.A."/>
            <person name="Amieva M.R."/>
            <person name="Covacci A."/>
            <person name="Lowe T.M."/>
            <person name="Merrell D.S."/>
            <person name="Ottemann K.M."/>
            <person name="Stein M."/>
            <person name="Salama N.R."/>
            <person name="Guillemin K."/>
        </authorList>
    </citation>
    <scope>NUCLEOTIDE SEQUENCE [LARGE SCALE GENOMIC DNA]</scope>
    <source>
        <strain>G27</strain>
    </source>
</reference>
<name>TGT_HELPG</name>
<organism>
    <name type="scientific">Helicobacter pylori (strain G27)</name>
    <dbReference type="NCBI Taxonomy" id="563041"/>
    <lineage>
        <taxon>Bacteria</taxon>
        <taxon>Pseudomonadati</taxon>
        <taxon>Campylobacterota</taxon>
        <taxon>Epsilonproteobacteria</taxon>
        <taxon>Campylobacterales</taxon>
        <taxon>Helicobacteraceae</taxon>
        <taxon>Helicobacter</taxon>
    </lineage>
</organism>
<accession>B5ZA47</accession>
<evidence type="ECO:0000255" key="1">
    <source>
        <dbReference type="HAMAP-Rule" id="MF_00168"/>
    </source>
</evidence>
<sequence>MDFQLQAIDKHARAGLLNLAHSQVATPVFMPVGTQGCIKSLDAMDMQEILGAKLILANTYHMYLRPGEKVVEQLGGLHRFAQFHGSFLTDSGGFQAFSLSGNVKLQEDGIVFKSHIDGSKHFFTPAKVLDIQYSLNSDIMMVLDDLVGLPAPLKRLEESIKRSAKWANLSLEYHKEKNRPNNNLFAIIQGGTHLKMRSLSVELTHKGFDGYAIGGLAVGESVDEMLETIAHTAPLLPKDKPRYLMGVGTPENILDAISLGVDMFDCVMPTRNARNATLFTHSGKISIKNAPYKLDNTPIEENCACYACKRYSKAYLHHLFRAKELTYARLASLHNLHFYLEMVKNARNAILEKRFLSFKKEFLEKYHSCSH</sequence>